<sequence length="372" mass="43500">MNLEEENTIFKPLYSLKHSPINAYFSKNSDDFVVRERPLYEFSGKGEHLILHINKKDLTTNEALKILSETSGVKIRDFGYAGLKDKQGSTFQYLSMPKKFESFLSNFSHPKLKILEIFTHENKLRIGHLKGNTFFIRLKKVLPSDALKLEQALMNLDKQGFTNYFGYQRFGKFGDNYKEGLEILHGKKMKNVKMKEFLISAFQSELFNRYLSKRVELSHFANDFSEKELIQIYKISKEEAKELKKQEQFFKLLKGEVLGHYPFGKCFLCEDLSAELGRFKARDISAMGLLIGAKAYETGEGLALNLENEIFKDTLEFKAKMQGSRRFMWGYLEELKWRYDEEKAHFCIEFFLQKGSYATVVLEEILHKNLFE</sequence>
<keyword id="KW-0413">Isomerase</keyword>
<keyword id="KW-0819">tRNA processing</keyword>
<name>TRUD_CAMJJ</name>
<proteinExistence type="inferred from homology"/>
<dbReference type="EC" id="5.4.99.27" evidence="1"/>
<dbReference type="EMBL" id="CP000538">
    <property type="protein sequence ID" value="EAQ72518.1"/>
    <property type="molecule type" value="Genomic_DNA"/>
</dbReference>
<dbReference type="RefSeq" id="WP_002869188.1">
    <property type="nucleotide sequence ID" value="NC_008787.1"/>
</dbReference>
<dbReference type="SMR" id="A1W165"/>
<dbReference type="KEGG" id="cjj:CJJ81176_1450"/>
<dbReference type="eggNOG" id="COG0585">
    <property type="taxonomic scope" value="Bacteria"/>
</dbReference>
<dbReference type="HOGENOM" id="CLU_005281_4_0_7"/>
<dbReference type="Proteomes" id="UP000000646">
    <property type="component" value="Chromosome"/>
</dbReference>
<dbReference type="GO" id="GO:0005829">
    <property type="term" value="C:cytosol"/>
    <property type="evidence" value="ECO:0007669"/>
    <property type="project" value="TreeGrafter"/>
</dbReference>
<dbReference type="GO" id="GO:0003723">
    <property type="term" value="F:RNA binding"/>
    <property type="evidence" value="ECO:0007669"/>
    <property type="project" value="InterPro"/>
</dbReference>
<dbReference type="GO" id="GO:0160150">
    <property type="term" value="F:tRNA pseudouridine(13) synthase activity"/>
    <property type="evidence" value="ECO:0007669"/>
    <property type="project" value="UniProtKB-EC"/>
</dbReference>
<dbReference type="GO" id="GO:0031119">
    <property type="term" value="P:tRNA pseudouridine synthesis"/>
    <property type="evidence" value="ECO:0007669"/>
    <property type="project" value="UniProtKB-UniRule"/>
</dbReference>
<dbReference type="CDD" id="cd02575">
    <property type="entry name" value="PseudoU_synth_EcTruD"/>
    <property type="match status" value="1"/>
</dbReference>
<dbReference type="FunFam" id="3.30.2350.20:FF:000008">
    <property type="entry name" value="tRNA pseudouridine synthase D"/>
    <property type="match status" value="1"/>
</dbReference>
<dbReference type="Gene3D" id="3.30.2350.20">
    <property type="entry name" value="TruD, catalytic domain"/>
    <property type="match status" value="1"/>
</dbReference>
<dbReference type="HAMAP" id="MF_01082">
    <property type="entry name" value="TruD"/>
    <property type="match status" value="1"/>
</dbReference>
<dbReference type="InterPro" id="IPR020103">
    <property type="entry name" value="PsdUridine_synth_cat_dom_sf"/>
</dbReference>
<dbReference type="InterPro" id="IPR001656">
    <property type="entry name" value="PsdUridine_synth_TruD"/>
</dbReference>
<dbReference type="InterPro" id="IPR020119">
    <property type="entry name" value="PsdUridine_synth_TruD_CS"/>
</dbReference>
<dbReference type="InterPro" id="IPR011760">
    <property type="entry name" value="PsdUridine_synth_TruD_insert"/>
</dbReference>
<dbReference type="InterPro" id="IPR042214">
    <property type="entry name" value="TruD_catalytic"/>
</dbReference>
<dbReference type="InterPro" id="IPR050170">
    <property type="entry name" value="TruD_pseudoU_synthase"/>
</dbReference>
<dbReference type="NCBIfam" id="NF002154">
    <property type="entry name" value="PRK00984.1-3"/>
    <property type="match status" value="1"/>
</dbReference>
<dbReference type="NCBIfam" id="TIGR00094">
    <property type="entry name" value="tRNA_TruD_broad"/>
    <property type="match status" value="1"/>
</dbReference>
<dbReference type="PANTHER" id="PTHR47811">
    <property type="entry name" value="TRNA PSEUDOURIDINE SYNTHASE D"/>
    <property type="match status" value="1"/>
</dbReference>
<dbReference type="PANTHER" id="PTHR47811:SF1">
    <property type="entry name" value="TRNA PSEUDOURIDINE SYNTHASE D"/>
    <property type="match status" value="1"/>
</dbReference>
<dbReference type="Pfam" id="PF01142">
    <property type="entry name" value="TruD"/>
    <property type="match status" value="2"/>
</dbReference>
<dbReference type="SUPFAM" id="SSF55120">
    <property type="entry name" value="Pseudouridine synthase"/>
    <property type="match status" value="1"/>
</dbReference>
<dbReference type="PROSITE" id="PS50984">
    <property type="entry name" value="TRUD"/>
    <property type="match status" value="1"/>
</dbReference>
<dbReference type="PROSITE" id="PS01268">
    <property type="entry name" value="UPF0024"/>
    <property type="match status" value="1"/>
</dbReference>
<evidence type="ECO:0000255" key="1">
    <source>
        <dbReference type="HAMAP-Rule" id="MF_01082"/>
    </source>
</evidence>
<comment type="function">
    <text evidence="1">Responsible for synthesis of pseudouridine from uracil-13 in transfer RNAs.</text>
</comment>
<comment type="catalytic activity">
    <reaction evidence="1">
        <text>uridine(13) in tRNA = pseudouridine(13) in tRNA</text>
        <dbReference type="Rhea" id="RHEA:42540"/>
        <dbReference type="Rhea" id="RHEA-COMP:10105"/>
        <dbReference type="Rhea" id="RHEA-COMP:10106"/>
        <dbReference type="ChEBI" id="CHEBI:65314"/>
        <dbReference type="ChEBI" id="CHEBI:65315"/>
        <dbReference type="EC" id="5.4.99.27"/>
    </reaction>
</comment>
<comment type="similarity">
    <text evidence="1">Belongs to the pseudouridine synthase TruD family.</text>
</comment>
<feature type="chain" id="PRO_1000084732" description="tRNA pseudouridine synthase D">
    <location>
        <begin position="1"/>
        <end position="372"/>
    </location>
</feature>
<feature type="domain" description="TRUD" evidence="1">
    <location>
        <begin position="160"/>
        <end position="330"/>
    </location>
</feature>
<feature type="active site" description="Nucleophile" evidence="1">
    <location>
        <position position="85"/>
    </location>
</feature>
<accession>A1W165</accession>
<gene>
    <name evidence="1" type="primary">truD</name>
    <name type="ordered locus">CJJ81176_1450</name>
</gene>
<organism>
    <name type="scientific">Campylobacter jejuni subsp. jejuni serotype O:23/36 (strain 81-176)</name>
    <dbReference type="NCBI Taxonomy" id="354242"/>
    <lineage>
        <taxon>Bacteria</taxon>
        <taxon>Pseudomonadati</taxon>
        <taxon>Campylobacterota</taxon>
        <taxon>Epsilonproteobacteria</taxon>
        <taxon>Campylobacterales</taxon>
        <taxon>Campylobacteraceae</taxon>
        <taxon>Campylobacter</taxon>
    </lineage>
</organism>
<protein>
    <recommendedName>
        <fullName evidence="1">tRNA pseudouridine synthase D</fullName>
        <ecNumber evidence="1">5.4.99.27</ecNumber>
    </recommendedName>
    <alternativeName>
        <fullName evidence="1">tRNA pseudouridine(13) synthase</fullName>
    </alternativeName>
    <alternativeName>
        <fullName evidence="1">tRNA pseudouridylate synthase D</fullName>
    </alternativeName>
    <alternativeName>
        <fullName evidence="1">tRNA-uridine isomerase D</fullName>
    </alternativeName>
</protein>
<reference key="1">
    <citation type="submission" date="2006-12" db="EMBL/GenBank/DDBJ databases">
        <authorList>
            <person name="Fouts D.E."/>
            <person name="Nelson K.E."/>
            <person name="Sebastian Y."/>
        </authorList>
    </citation>
    <scope>NUCLEOTIDE SEQUENCE [LARGE SCALE GENOMIC DNA]</scope>
    <source>
        <strain>81-176</strain>
    </source>
</reference>